<feature type="chain" id="PRO_0000116829" description="Triacylglycerol lipase ptl2">
    <location>
        <begin position="1"/>
        <end position="630"/>
    </location>
</feature>
<feature type="domain" description="PNPLA" evidence="2">
    <location>
        <begin position="251"/>
        <end position="442"/>
    </location>
</feature>
<feature type="short sequence motif" description="GXSXG" evidence="2">
    <location>
        <begin position="282"/>
        <end position="286"/>
    </location>
</feature>
<feature type="active site" description="Nucleophile" evidence="2">
    <location>
        <position position="284"/>
    </location>
</feature>
<feature type="active site" description="Proton acceptor" evidence="2">
    <location>
        <position position="429"/>
    </location>
</feature>
<proteinExistence type="inferred from homology"/>
<protein>
    <recommendedName>
        <fullName>Triacylglycerol lipase ptl2</fullName>
        <ecNumber evidence="1">3.1.1.3</ecNumber>
    </recommendedName>
</protein>
<keyword id="KW-0378">Hydrolase</keyword>
<keyword id="KW-0442">Lipid degradation</keyword>
<keyword id="KW-0551">Lipid droplet</keyword>
<keyword id="KW-0443">Lipid metabolism</keyword>
<keyword id="KW-1185">Reference proteome</keyword>
<name>TGL4_SCHPO</name>
<gene>
    <name type="primary">ptl2</name>
    <name type="ORF">SPAC1786.01c</name>
    <name type="ORF">SPAC31G5.20c</name>
</gene>
<organism>
    <name type="scientific">Schizosaccharomyces pombe (strain 972 / ATCC 24843)</name>
    <name type="common">Fission yeast</name>
    <dbReference type="NCBI Taxonomy" id="284812"/>
    <lineage>
        <taxon>Eukaryota</taxon>
        <taxon>Fungi</taxon>
        <taxon>Dikarya</taxon>
        <taxon>Ascomycota</taxon>
        <taxon>Taphrinomycotina</taxon>
        <taxon>Schizosaccharomycetes</taxon>
        <taxon>Schizosaccharomycetales</taxon>
        <taxon>Schizosaccharomycetaceae</taxon>
        <taxon>Schizosaccharomyces</taxon>
    </lineage>
</organism>
<sequence>MSIPEESEINKDYTVQEDLDEFAKYTCVYKKRHDEKIEYITAQHDWNPVYEAVVPRKSKPGKDEKREGFMYPILRWPLMFTAFLCLTFVAFLYLLDRLYINCYEYFIVWRGEARRLRKLLQEAKTYEEWKERARALDKYFGNDEWKLDPVYDYYDYTLVQAVYSSLVKHREQKDWNALKSVLDVCVRSNFGGIDSSMLYSRTYSGTKKLVEDYVNELKVCLETVIDQRLYTAQERSKMFEYFSHNYGRTALCLSGGASFAIYHTGVLRALLNQDLIPNVITGTSGGGLLAALVCTRTNEELKQLLVPELASKYQSDIGNWLDATKRYFRTGARFDEILWAKTCMYFTRGSLTFAEAYKRTGRILNISVIPSDVHSPPKLINYLTSPDTVIWSAVIASCAVPGILNPIPLMTRSQSHRLIPHNFGNRFKDGSLRTDIPLSELRTQFNVHFSIVSQTNPHVQVFFFSPRGTVGRPVSHRKGRGWRGGYVGSAIEQFLKYDMIKWLHVIRSLELLPRPLGTDWSSVFLQKFDGTITIWPKTKFQDFYYILSPPSVERLGYMIDAGQAATFPKLDFIAARMTIEKLIEKGRMMDKPSKLGRSIDGTIGTSMSRGDIEISQESASISPEDIDIVN</sequence>
<accession>O14115</accession>
<accession>Q9UTH6</accession>
<comment type="function">
    <text evidence="3">Lipid particle-localized triacylglycerol (TAG) lipase. The lipid droplet/particle is a lipid storage compartment which serves as a depot of energy and building blocks for membrane lipid biosynthesis. Involved in the mobilization of the non-polar storage lipids triacylglycerols (TAGs) from lipid particles by hydrolysis of TAGs, releasing and supplying specific fatty acids to the appropriate metabolic pathways.</text>
</comment>
<comment type="catalytic activity">
    <reaction evidence="1">
        <text>a triacylglycerol + H2O = a diacylglycerol + a fatty acid + H(+)</text>
        <dbReference type="Rhea" id="RHEA:12044"/>
        <dbReference type="ChEBI" id="CHEBI:15377"/>
        <dbReference type="ChEBI" id="CHEBI:15378"/>
        <dbReference type="ChEBI" id="CHEBI:17855"/>
        <dbReference type="ChEBI" id="CHEBI:18035"/>
        <dbReference type="ChEBI" id="CHEBI:28868"/>
        <dbReference type="EC" id="3.1.1.3"/>
    </reaction>
    <physiologicalReaction direction="left-to-right" evidence="1">
        <dbReference type="Rhea" id="RHEA:12045"/>
    </physiologicalReaction>
</comment>
<comment type="subcellular location">
    <subcellularLocation>
        <location evidence="1">Lipid droplet</location>
    </subcellularLocation>
</comment>
<comment type="similarity">
    <text evidence="4">Belongs to the PLPL family.</text>
</comment>
<reference key="1">
    <citation type="journal article" date="2002" name="Nature">
        <title>The genome sequence of Schizosaccharomyces pombe.</title>
        <authorList>
            <person name="Wood V."/>
            <person name="Gwilliam R."/>
            <person name="Rajandream M.A."/>
            <person name="Lyne M.H."/>
            <person name="Lyne R."/>
            <person name="Stewart A."/>
            <person name="Sgouros J.G."/>
            <person name="Peat N."/>
            <person name="Hayles J."/>
            <person name="Baker S.G."/>
            <person name="Basham D."/>
            <person name="Bowman S."/>
            <person name="Brooks K."/>
            <person name="Brown D."/>
            <person name="Brown S."/>
            <person name="Chillingworth T."/>
            <person name="Churcher C.M."/>
            <person name="Collins M."/>
            <person name="Connor R."/>
            <person name="Cronin A."/>
            <person name="Davis P."/>
            <person name="Feltwell T."/>
            <person name="Fraser A."/>
            <person name="Gentles S."/>
            <person name="Goble A."/>
            <person name="Hamlin N."/>
            <person name="Harris D.E."/>
            <person name="Hidalgo J."/>
            <person name="Hodgson G."/>
            <person name="Holroyd S."/>
            <person name="Hornsby T."/>
            <person name="Howarth S."/>
            <person name="Huckle E.J."/>
            <person name="Hunt S."/>
            <person name="Jagels K."/>
            <person name="James K.D."/>
            <person name="Jones L."/>
            <person name="Jones M."/>
            <person name="Leather S."/>
            <person name="McDonald S."/>
            <person name="McLean J."/>
            <person name="Mooney P."/>
            <person name="Moule S."/>
            <person name="Mungall K.L."/>
            <person name="Murphy L.D."/>
            <person name="Niblett D."/>
            <person name="Odell C."/>
            <person name="Oliver K."/>
            <person name="O'Neil S."/>
            <person name="Pearson D."/>
            <person name="Quail M.A."/>
            <person name="Rabbinowitsch E."/>
            <person name="Rutherford K.M."/>
            <person name="Rutter S."/>
            <person name="Saunders D."/>
            <person name="Seeger K."/>
            <person name="Sharp S."/>
            <person name="Skelton J."/>
            <person name="Simmonds M.N."/>
            <person name="Squares R."/>
            <person name="Squares S."/>
            <person name="Stevens K."/>
            <person name="Taylor K."/>
            <person name="Taylor R.G."/>
            <person name="Tivey A."/>
            <person name="Walsh S.V."/>
            <person name="Warren T."/>
            <person name="Whitehead S."/>
            <person name="Woodward J.R."/>
            <person name="Volckaert G."/>
            <person name="Aert R."/>
            <person name="Robben J."/>
            <person name="Grymonprez B."/>
            <person name="Weltjens I."/>
            <person name="Vanstreels E."/>
            <person name="Rieger M."/>
            <person name="Schaefer M."/>
            <person name="Mueller-Auer S."/>
            <person name="Gabel C."/>
            <person name="Fuchs M."/>
            <person name="Duesterhoeft A."/>
            <person name="Fritzc C."/>
            <person name="Holzer E."/>
            <person name="Moestl D."/>
            <person name="Hilbert H."/>
            <person name="Borzym K."/>
            <person name="Langer I."/>
            <person name="Beck A."/>
            <person name="Lehrach H."/>
            <person name="Reinhardt R."/>
            <person name="Pohl T.M."/>
            <person name="Eger P."/>
            <person name="Zimmermann W."/>
            <person name="Wedler H."/>
            <person name="Wambutt R."/>
            <person name="Purnelle B."/>
            <person name="Goffeau A."/>
            <person name="Cadieu E."/>
            <person name="Dreano S."/>
            <person name="Gloux S."/>
            <person name="Lelaure V."/>
            <person name="Mottier S."/>
            <person name="Galibert F."/>
            <person name="Aves S.J."/>
            <person name="Xiang Z."/>
            <person name="Hunt C."/>
            <person name="Moore K."/>
            <person name="Hurst S.M."/>
            <person name="Lucas M."/>
            <person name="Rochet M."/>
            <person name="Gaillardin C."/>
            <person name="Tallada V.A."/>
            <person name="Garzon A."/>
            <person name="Thode G."/>
            <person name="Daga R.R."/>
            <person name="Cruzado L."/>
            <person name="Jimenez J."/>
            <person name="Sanchez M."/>
            <person name="del Rey F."/>
            <person name="Benito J."/>
            <person name="Dominguez A."/>
            <person name="Revuelta J.L."/>
            <person name="Moreno S."/>
            <person name="Armstrong J."/>
            <person name="Forsburg S.L."/>
            <person name="Cerutti L."/>
            <person name="Lowe T."/>
            <person name="McCombie W.R."/>
            <person name="Paulsen I."/>
            <person name="Potashkin J."/>
            <person name="Shpakovski G.V."/>
            <person name="Ussery D."/>
            <person name="Barrell B.G."/>
            <person name="Nurse P."/>
        </authorList>
    </citation>
    <scope>NUCLEOTIDE SEQUENCE [LARGE SCALE GENOMIC DNA]</scope>
    <source>
        <strain>972 / ATCC 24843</strain>
    </source>
</reference>
<reference key="2">
    <citation type="journal article" date="2012" name="Appl. Microbiol. Biotechnol.">
        <title>Characterization of triglyceride lipase genes of fission yeast Schizosaccharomyces pombe.</title>
        <authorList>
            <person name="Yazawa H."/>
            <person name="Kumagai H."/>
            <person name="Uemura H."/>
        </authorList>
    </citation>
    <scope>FUNCTION</scope>
</reference>
<dbReference type="EC" id="3.1.1.3" evidence="1"/>
<dbReference type="EMBL" id="CU329670">
    <property type="protein sequence ID" value="CAB11704.2"/>
    <property type="molecule type" value="Genomic_DNA"/>
</dbReference>
<dbReference type="PIR" id="T38637">
    <property type="entry name" value="T38637"/>
</dbReference>
<dbReference type="RefSeq" id="XP_001713076.1">
    <property type="nucleotide sequence ID" value="XM_001713024.2"/>
</dbReference>
<dbReference type="BioGRID" id="278754">
    <property type="interactions" value="27"/>
</dbReference>
<dbReference type="STRING" id="284812.O14115"/>
<dbReference type="iPTMnet" id="O14115"/>
<dbReference type="PaxDb" id="4896-SPAC1786.01c.1"/>
<dbReference type="EnsemblFungi" id="SPAC1786.01c.1">
    <property type="protein sequence ID" value="SPAC1786.01c.1:pep"/>
    <property type="gene ID" value="SPAC1786.01c"/>
</dbReference>
<dbReference type="PomBase" id="SPAC1786.01c">
    <property type="gene designation" value="ptl2"/>
</dbReference>
<dbReference type="VEuPathDB" id="FungiDB:SPAC1786.01c"/>
<dbReference type="eggNOG" id="KOG2214">
    <property type="taxonomic scope" value="Eukaryota"/>
</dbReference>
<dbReference type="HOGENOM" id="CLU_009031_2_2_1"/>
<dbReference type="InParanoid" id="O14115"/>
<dbReference type="OMA" id="CSWFTRG"/>
<dbReference type="PhylomeDB" id="O14115"/>
<dbReference type="PRO" id="PR:O14115"/>
<dbReference type="Proteomes" id="UP000002485">
    <property type="component" value="Chromosome I"/>
</dbReference>
<dbReference type="GO" id="GO:0005737">
    <property type="term" value="C:cytoplasm"/>
    <property type="evidence" value="ECO:0007005"/>
    <property type="project" value="PomBase"/>
</dbReference>
<dbReference type="GO" id="GO:0005811">
    <property type="term" value="C:lipid droplet"/>
    <property type="evidence" value="ECO:0000314"/>
    <property type="project" value="PomBase"/>
</dbReference>
<dbReference type="GO" id="GO:0004806">
    <property type="term" value="F:triacylglycerol lipase activity"/>
    <property type="evidence" value="ECO:0000315"/>
    <property type="project" value="PomBase"/>
</dbReference>
<dbReference type="GO" id="GO:1990748">
    <property type="term" value="P:cellular detoxification"/>
    <property type="evidence" value="ECO:0000315"/>
    <property type="project" value="PomBase"/>
</dbReference>
<dbReference type="GO" id="GO:0016042">
    <property type="term" value="P:lipid catabolic process"/>
    <property type="evidence" value="ECO:0007669"/>
    <property type="project" value="UniProtKB-KW"/>
</dbReference>
<dbReference type="GO" id="GO:0006642">
    <property type="term" value="P:triglyceride mobilization"/>
    <property type="evidence" value="ECO:0000315"/>
    <property type="project" value="PomBase"/>
</dbReference>
<dbReference type="CDD" id="cd07232">
    <property type="entry name" value="Pat_PLPL"/>
    <property type="match status" value="1"/>
</dbReference>
<dbReference type="FunFam" id="3.40.1090.10:FF:000085">
    <property type="entry name" value="Patatin-like phospholipase domain-containing protein SPAC1786.01c"/>
    <property type="match status" value="1"/>
</dbReference>
<dbReference type="Gene3D" id="3.40.1090.10">
    <property type="entry name" value="Cytosolic phospholipase A2 catalytic domain"/>
    <property type="match status" value="2"/>
</dbReference>
<dbReference type="InterPro" id="IPR016035">
    <property type="entry name" value="Acyl_Trfase/lysoPLipase"/>
</dbReference>
<dbReference type="InterPro" id="IPR050301">
    <property type="entry name" value="NTE"/>
</dbReference>
<dbReference type="InterPro" id="IPR002641">
    <property type="entry name" value="PNPLA_dom"/>
</dbReference>
<dbReference type="InterPro" id="IPR021771">
    <property type="entry name" value="Triacylglycerol_lipase_N"/>
</dbReference>
<dbReference type="PANTHER" id="PTHR14226">
    <property type="entry name" value="NEUROPATHY TARGET ESTERASE/SWISS CHEESE D.MELANOGASTER"/>
    <property type="match status" value="1"/>
</dbReference>
<dbReference type="PANTHER" id="PTHR14226:SF66">
    <property type="entry name" value="TRIACYLGLYCEROL LIPASE PTL2"/>
    <property type="match status" value="1"/>
</dbReference>
<dbReference type="Pfam" id="PF11815">
    <property type="entry name" value="DUF3336"/>
    <property type="match status" value="1"/>
</dbReference>
<dbReference type="Pfam" id="PF01734">
    <property type="entry name" value="Patatin"/>
    <property type="match status" value="1"/>
</dbReference>
<dbReference type="SUPFAM" id="SSF52151">
    <property type="entry name" value="FabD/lysophospholipase-like"/>
    <property type="match status" value="1"/>
</dbReference>
<dbReference type="PROSITE" id="PS51635">
    <property type="entry name" value="PNPLA"/>
    <property type="match status" value="1"/>
</dbReference>
<evidence type="ECO:0000250" key="1">
    <source>
        <dbReference type="UniProtKB" id="P36165"/>
    </source>
</evidence>
<evidence type="ECO:0000255" key="2">
    <source>
        <dbReference type="PROSITE-ProRule" id="PRU01161"/>
    </source>
</evidence>
<evidence type="ECO:0000269" key="3">
    <source>
    </source>
</evidence>
<evidence type="ECO:0000305" key="4"/>